<name>HSP1_MURCY</name>
<proteinExistence type="evidence at transcript level"/>
<keyword id="KW-0158">Chromosome</keyword>
<keyword id="KW-0217">Developmental protein</keyword>
<keyword id="KW-0221">Differentiation</keyword>
<keyword id="KW-0226">DNA condensation</keyword>
<keyword id="KW-0238">DNA-binding</keyword>
<keyword id="KW-0544">Nucleosome core</keyword>
<keyword id="KW-0539">Nucleus</keyword>
<keyword id="KW-0744">Spermatogenesis</keyword>
<feature type="chain" id="PRO_0000191499" description="Sperm protamine P1">
    <location>
        <begin position="1"/>
        <end position="48"/>
    </location>
</feature>
<organism>
    <name type="scientific">Murina cyclotis</name>
    <name type="common">Round-eared tube-nosed bat</name>
    <dbReference type="NCBI Taxonomy" id="177185"/>
    <lineage>
        <taxon>Eukaryota</taxon>
        <taxon>Metazoa</taxon>
        <taxon>Chordata</taxon>
        <taxon>Craniata</taxon>
        <taxon>Vertebrata</taxon>
        <taxon>Euteleostomi</taxon>
        <taxon>Mammalia</taxon>
        <taxon>Eutheria</taxon>
        <taxon>Laurasiatheria</taxon>
        <taxon>Chiroptera</taxon>
        <taxon>Yangochiroptera</taxon>
        <taxon>Vespertilionidae</taxon>
        <taxon>Murina</taxon>
    </lineage>
</organism>
<protein>
    <recommendedName>
        <fullName>Sperm protamine P1</fullName>
    </recommendedName>
</protein>
<evidence type="ECO:0000250" key="1"/>
<evidence type="ECO:0000305" key="2"/>
<gene>
    <name type="primary">PRM1</name>
</gene>
<reference key="1">
    <citation type="journal article" date="2002" name="Mol. Phylogenet. Evol.">
        <title>Characterization and phylogenetic utility of the mammalian protamine P1 gene.</title>
        <authorList>
            <person name="Van Den Bussche R.A."/>
            <person name="Hoofer S.R."/>
            <person name="Hansen E.W."/>
        </authorList>
    </citation>
    <scope>NUCLEOTIDE SEQUENCE [GENOMIC DNA]</scope>
</reference>
<dbReference type="EMBL" id="AF435947">
    <property type="protein sequence ID" value="AAL35581.1"/>
    <property type="molecule type" value="Genomic_DNA"/>
</dbReference>
<dbReference type="GO" id="GO:0000786">
    <property type="term" value="C:nucleosome"/>
    <property type="evidence" value="ECO:0007669"/>
    <property type="project" value="UniProtKB-KW"/>
</dbReference>
<dbReference type="GO" id="GO:0005634">
    <property type="term" value="C:nucleus"/>
    <property type="evidence" value="ECO:0007669"/>
    <property type="project" value="UniProtKB-SubCell"/>
</dbReference>
<dbReference type="GO" id="GO:0003677">
    <property type="term" value="F:DNA binding"/>
    <property type="evidence" value="ECO:0007669"/>
    <property type="project" value="UniProtKB-KW"/>
</dbReference>
<dbReference type="GO" id="GO:0030261">
    <property type="term" value="P:chromosome condensation"/>
    <property type="evidence" value="ECO:0007669"/>
    <property type="project" value="UniProtKB-KW"/>
</dbReference>
<dbReference type="GO" id="GO:0035092">
    <property type="term" value="P:sperm DNA condensation"/>
    <property type="evidence" value="ECO:0007669"/>
    <property type="project" value="InterPro"/>
</dbReference>
<dbReference type="InterPro" id="IPR000221">
    <property type="entry name" value="Protamine_P1"/>
</dbReference>
<dbReference type="Pfam" id="PF00260">
    <property type="entry name" value="Protamine_P1"/>
    <property type="match status" value="1"/>
</dbReference>
<comment type="function">
    <text evidence="1">Protamines substitute for histones in the chromatin of sperm during the haploid phase of spermatogenesis. They compact sperm DNA into a highly condensed, stable and inactive complex (By similarity).</text>
</comment>
<comment type="subcellular location">
    <subcellularLocation>
        <location evidence="1">Nucleus</location>
    </subcellularLocation>
    <subcellularLocation>
        <location evidence="1">Chromosome</location>
    </subcellularLocation>
</comment>
<comment type="tissue specificity">
    <text>Testis.</text>
</comment>
<comment type="similarity">
    <text evidence="2">Belongs to the protamine P1 family.</text>
</comment>
<sequence length="48" mass="6556">MARYRCCRSRSRCRRRRRRCHRRRRRCSRRRRRRVCCRRYTVIRCRRR</sequence>
<accession>Q8WNY7</accession>